<reference key="1">
    <citation type="journal article" date="2008" name="Toxicon">
        <title>Purification and characterization of a novel excitatory peptide from Conus distans venom that defines a novel gene superfamily of conotoxins.</title>
        <authorList>
            <person name="Chen P."/>
            <person name="Garrett J.E."/>
            <person name="Watkins M."/>
            <person name="Olivera B.M."/>
        </authorList>
    </citation>
    <scope>NUCLEOTIDE SEQUENCE [MRNA]</scope>
    <scope>PROTEIN SEQUENCE OF 50-98</scope>
    <scope>GAMMA-CARBOXYGLUTAMATION AT GLU-63</scope>
    <scope>HYDROXYLATION AT PRO-53; PRO-68; PRO-93 AND PRO-97</scope>
    <scope>SYNTHESIS OF 50-98</scope>
    <scope>FUNCTION</scope>
    <scope>MASS SPECTROMETRY</scope>
    <source>
        <tissue>Venom</tissue>
        <tissue>Venom duct</tissue>
    </source>
</reference>
<accession>P0C8W0</accession>
<accession>E2DEL1</accession>
<proteinExistence type="evidence at protein level"/>
<sequence>MSTLGILLPIALLLPLANPAENGDGQAMPRTRNLRSLSFGRTLRRLEKRGCDPTDGCQTTVCETDTGPCCCKPNFTCQISNSGTKSCSCSGQPSDCPV</sequence>
<protein>
    <recommendedName>
        <fullName evidence="4">Conotoxin Di19A</fullName>
    </recommendedName>
    <alternativeName>
        <fullName evidence="3">Conotoxin di16a</fullName>
    </alternativeName>
</protein>
<comment type="function">
    <text evidence="2">Injection of the synthetic peptide causes a hyperexcitable phenotype in mice greater than three weeks of age at lower doses, and lethargy at higher doses.</text>
</comment>
<comment type="subcellular location">
    <subcellularLocation>
        <location>Secreted</location>
    </subcellularLocation>
</comment>
<comment type="tissue specificity">
    <text>Expressed by the venom duct.</text>
</comment>
<comment type="domain">
    <text>The cysteine framework is XIX (C-C-C-CCC-C-C-C-C).</text>
</comment>
<comment type="PTM">
    <text evidence="2">Contains 5 disulfide bonds.</text>
</comment>
<comment type="mass spectrometry"/>
<comment type="miscellaneous">
    <text evidence="5">Negative results: has no effect on glutamate (NMDA) receptors, Kv1.1/KCNA1, Kv1.2/KCNA2, Kv1.6/KCNA6, Nav1.2/SCN2A and Nav1.4/SCN4A channels, and acetylcholine receptors alpha-9/alpha-10.</text>
</comment>
<organism>
    <name type="scientific">Conus distans</name>
    <name type="common">Distant cone</name>
    <dbReference type="NCBI Taxonomy" id="72281"/>
    <lineage>
        <taxon>Eukaryota</taxon>
        <taxon>Metazoa</taxon>
        <taxon>Spiralia</taxon>
        <taxon>Lophotrochozoa</taxon>
        <taxon>Mollusca</taxon>
        <taxon>Gastropoda</taxon>
        <taxon>Caenogastropoda</taxon>
        <taxon>Neogastropoda</taxon>
        <taxon>Conoidea</taxon>
        <taxon>Conidae</taxon>
        <taxon>Conus</taxon>
        <taxon>Fraterconus</taxon>
    </lineage>
</organism>
<dbReference type="EMBL" id="GQ981403">
    <property type="protein sequence ID" value="ADN79122.1"/>
    <property type="molecule type" value="mRNA"/>
</dbReference>
<dbReference type="ConoServer" id="2842">
    <property type="toxin name" value="Di19A precursor"/>
</dbReference>
<dbReference type="GO" id="GO:0005576">
    <property type="term" value="C:extracellular region"/>
    <property type="evidence" value="ECO:0007669"/>
    <property type="project" value="UniProtKB-SubCell"/>
</dbReference>
<dbReference type="GO" id="GO:0090729">
    <property type="term" value="F:toxin activity"/>
    <property type="evidence" value="ECO:0007669"/>
    <property type="project" value="UniProtKB-KW"/>
</dbReference>
<name>CJA_CONDI</name>
<keyword id="KW-0165">Cleavage on pair of basic residues</keyword>
<keyword id="KW-0903">Direct protein sequencing</keyword>
<keyword id="KW-1015">Disulfide bond</keyword>
<keyword id="KW-0301">Gamma-carboxyglutamic acid</keyword>
<keyword id="KW-0379">Hydroxylation</keyword>
<keyword id="KW-0528">Neurotoxin</keyword>
<keyword id="KW-0964">Secreted</keyword>
<keyword id="KW-0732">Signal</keyword>
<keyword id="KW-0800">Toxin</keyword>
<feature type="signal peptide" evidence="1">
    <location>
        <begin position="1"/>
        <end position="19"/>
    </location>
</feature>
<feature type="propeptide" id="PRO_0000366093" evidence="5">
    <location>
        <begin position="20"/>
        <end position="49"/>
    </location>
</feature>
<feature type="peptide" id="PRO_0000366094" description="Conotoxin Di19A" evidence="2">
    <location>
        <begin position="50"/>
        <end position="98"/>
    </location>
</feature>
<feature type="modified residue" description="4-hydroxyproline" evidence="2">
    <location>
        <position position="53"/>
    </location>
</feature>
<feature type="modified residue" description="4-carboxyglutamate" evidence="2">
    <location>
        <position position="63"/>
    </location>
</feature>
<feature type="modified residue" description="4-hydroxyproline" evidence="2">
    <location>
        <position position="68"/>
    </location>
</feature>
<feature type="modified residue" description="4-hydroxyproline" evidence="2">
    <location>
        <position position="93"/>
    </location>
</feature>
<feature type="modified residue" description="4-hydroxyproline" evidence="2">
    <location>
        <position position="97"/>
    </location>
</feature>
<evidence type="ECO:0000255" key="1"/>
<evidence type="ECO:0000269" key="2">
    <source>
    </source>
</evidence>
<evidence type="ECO:0000303" key="3">
    <source>
    </source>
</evidence>
<evidence type="ECO:0000305" key="4"/>
<evidence type="ECO:0000305" key="5">
    <source>
    </source>
</evidence>